<feature type="chain" id="PRO_1000098663" description="tRNA dimethylallyltransferase">
    <location>
        <begin position="1"/>
        <end position="316"/>
    </location>
</feature>
<feature type="region of interest" description="Interaction with substrate tRNA" evidence="1">
    <location>
        <begin position="42"/>
        <end position="45"/>
    </location>
</feature>
<feature type="region of interest" description="Interaction with substrate tRNA" evidence="1">
    <location>
        <begin position="166"/>
        <end position="170"/>
    </location>
</feature>
<feature type="region of interest" description="Interaction with substrate tRNA" evidence="1">
    <location>
        <begin position="247"/>
        <end position="252"/>
    </location>
</feature>
<feature type="region of interest" description="Interaction with substrate tRNA" evidence="1">
    <location>
        <begin position="280"/>
        <end position="287"/>
    </location>
</feature>
<feature type="binding site" evidence="1">
    <location>
        <begin position="17"/>
        <end position="24"/>
    </location>
    <ligand>
        <name>ATP</name>
        <dbReference type="ChEBI" id="CHEBI:30616"/>
    </ligand>
</feature>
<feature type="binding site" evidence="1">
    <location>
        <begin position="19"/>
        <end position="24"/>
    </location>
    <ligand>
        <name>substrate</name>
    </ligand>
</feature>
<feature type="site" description="Interaction with substrate tRNA" evidence="1">
    <location>
        <position position="108"/>
    </location>
</feature>
<feature type="site" description="Interaction with substrate tRNA" evidence="1">
    <location>
        <position position="130"/>
    </location>
</feature>
<comment type="function">
    <text evidence="1">Catalyzes the transfer of a dimethylallyl group onto the adenine at position 37 in tRNAs that read codons beginning with uridine, leading to the formation of N6-(dimethylallyl)adenosine (i(6)A).</text>
</comment>
<comment type="catalytic activity">
    <reaction evidence="1">
        <text>adenosine(37) in tRNA + dimethylallyl diphosphate = N(6)-dimethylallyladenosine(37) in tRNA + diphosphate</text>
        <dbReference type="Rhea" id="RHEA:26482"/>
        <dbReference type="Rhea" id="RHEA-COMP:10162"/>
        <dbReference type="Rhea" id="RHEA-COMP:10375"/>
        <dbReference type="ChEBI" id="CHEBI:33019"/>
        <dbReference type="ChEBI" id="CHEBI:57623"/>
        <dbReference type="ChEBI" id="CHEBI:74411"/>
        <dbReference type="ChEBI" id="CHEBI:74415"/>
        <dbReference type="EC" id="2.5.1.75"/>
    </reaction>
</comment>
<comment type="cofactor">
    <cofactor evidence="1">
        <name>Mg(2+)</name>
        <dbReference type="ChEBI" id="CHEBI:18420"/>
    </cofactor>
</comment>
<comment type="subunit">
    <text evidence="1">Monomer.</text>
</comment>
<comment type="similarity">
    <text evidence="1">Belongs to the IPP transferase family.</text>
</comment>
<protein>
    <recommendedName>
        <fullName evidence="1">tRNA dimethylallyltransferase</fullName>
        <ecNumber evidence="1">2.5.1.75</ecNumber>
    </recommendedName>
    <alternativeName>
        <fullName evidence="1">Dimethylallyl diphosphate:tRNA dimethylallyltransferase</fullName>
        <shortName evidence="1">DMAPP:tRNA dimethylallyltransferase</shortName>
        <shortName evidence="1">DMATase</shortName>
    </alternativeName>
    <alternativeName>
        <fullName evidence="1">Isopentenyl-diphosphate:tRNA isopentenyltransferase</fullName>
        <shortName evidence="1">IPP transferase</shortName>
        <shortName evidence="1">IPPT</shortName>
        <shortName evidence="1">IPTase</shortName>
    </alternativeName>
</protein>
<proteinExistence type="inferred from homology"/>
<gene>
    <name evidence="1" type="primary">miaA</name>
    <name type="ordered locus">ECSE_4468</name>
</gene>
<name>MIAA_ECOSE</name>
<evidence type="ECO:0000255" key="1">
    <source>
        <dbReference type="HAMAP-Rule" id="MF_00185"/>
    </source>
</evidence>
<keyword id="KW-0067">ATP-binding</keyword>
<keyword id="KW-0460">Magnesium</keyword>
<keyword id="KW-0547">Nucleotide-binding</keyword>
<keyword id="KW-0808">Transferase</keyword>
<keyword id="KW-0819">tRNA processing</keyword>
<sequence length="316" mass="35065">MSDISKASLPKAIFLMGPTASGKTALAIELRKILPVELISVDSALIYKGMDIGTAKPNAEELLAAPHRLLDIRDPSQAYSAADFRRDALAEMADITAAGRIPLLVGGTMLYFKALLEGLSPLPSADPEVRARIEQQAAEQGWESLHRQLQEVDPVAAARIHPNDPQRLSRALEVFFISGKTLTELTQTSGDALPYQVHQFAIAPASRELLHQRIEQRFHQMLASGFEAEVRALFARGDLHTDLPSIRCVGYRQMWSYLEGEISYDEMVYRGVCATRQLAKRQITWLRGWEGVHWLDSEKPEQARDEVLQVVGAIAG</sequence>
<dbReference type="EC" id="2.5.1.75" evidence="1"/>
<dbReference type="EMBL" id="AP009240">
    <property type="protein sequence ID" value="BAG79992.1"/>
    <property type="molecule type" value="Genomic_DNA"/>
</dbReference>
<dbReference type="RefSeq" id="WP_001280345.1">
    <property type="nucleotide sequence ID" value="NC_011415.1"/>
</dbReference>
<dbReference type="SMR" id="B6I275"/>
<dbReference type="GeneID" id="93777650"/>
<dbReference type="KEGG" id="ecy:ECSE_4468"/>
<dbReference type="HOGENOM" id="CLU_032616_0_0_6"/>
<dbReference type="Proteomes" id="UP000008199">
    <property type="component" value="Chromosome"/>
</dbReference>
<dbReference type="GO" id="GO:0005524">
    <property type="term" value="F:ATP binding"/>
    <property type="evidence" value="ECO:0007669"/>
    <property type="project" value="UniProtKB-UniRule"/>
</dbReference>
<dbReference type="GO" id="GO:0052381">
    <property type="term" value="F:tRNA dimethylallyltransferase activity"/>
    <property type="evidence" value="ECO:0007669"/>
    <property type="project" value="UniProtKB-UniRule"/>
</dbReference>
<dbReference type="GO" id="GO:0006400">
    <property type="term" value="P:tRNA modification"/>
    <property type="evidence" value="ECO:0007669"/>
    <property type="project" value="TreeGrafter"/>
</dbReference>
<dbReference type="FunFam" id="1.10.20.140:FF:000001">
    <property type="entry name" value="tRNA dimethylallyltransferase"/>
    <property type="match status" value="1"/>
</dbReference>
<dbReference type="FunFam" id="1.10.287.890:FF:000001">
    <property type="entry name" value="tRNA dimethylallyltransferase"/>
    <property type="match status" value="1"/>
</dbReference>
<dbReference type="Gene3D" id="1.10.20.140">
    <property type="match status" value="1"/>
</dbReference>
<dbReference type="Gene3D" id="1.10.287.890">
    <property type="entry name" value="Crystal structure of tRNA isopentenylpyrophosphate transferase (bh2366) domain"/>
    <property type="match status" value="1"/>
</dbReference>
<dbReference type="Gene3D" id="3.40.50.300">
    <property type="entry name" value="P-loop containing nucleotide triphosphate hydrolases"/>
    <property type="match status" value="1"/>
</dbReference>
<dbReference type="HAMAP" id="MF_00185">
    <property type="entry name" value="IPP_trans"/>
    <property type="match status" value="1"/>
</dbReference>
<dbReference type="InterPro" id="IPR039657">
    <property type="entry name" value="Dimethylallyltransferase"/>
</dbReference>
<dbReference type="InterPro" id="IPR018022">
    <property type="entry name" value="IPT"/>
</dbReference>
<dbReference type="InterPro" id="IPR027417">
    <property type="entry name" value="P-loop_NTPase"/>
</dbReference>
<dbReference type="NCBIfam" id="TIGR00174">
    <property type="entry name" value="miaA"/>
    <property type="match status" value="1"/>
</dbReference>
<dbReference type="PANTHER" id="PTHR11088">
    <property type="entry name" value="TRNA DIMETHYLALLYLTRANSFERASE"/>
    <property type="match status" value="1"/>
</dbReference>
<dbReference type="PANTHER" id="PTHR11088:SF60">
    <property type="entry name" value="TRNA DIMETHYLALLYLTRANSFERASE"/>
    <property type="match status" value="1"/>
</dbReference>
<dbReference type="Pfam" id="PF01715">
    <property type="entry name" value="IPPT"/>
    <property type="match status" value="1"/>
</dbReference>
<dbReference type="SUPFAM" id="SSF52540">
    <property type="entry name" value="P-loop containing nucleoside triphosphate hydrolases"/>
    <property type="match status" value="1"/>
</dbReference>
<reference key="1">
    <citation type="journal article" date="2008" name="DNA Res.">
        <title>Complete genome sequence and comparative analysis of the wild-type commensal Escherichia coli strain SE11 isolated from a healthy adult.</title>
        <authorList>
            <person name="Oshima K."/>
            <person name="Toh H."/>
            <person name="Ogura Y."/>
            <person name="Sasamoto H."/>
            <person name="Morita H."/>
            <person name="Park S.-H."/>
            <person name="Ooka T."/>
            <person name="Iyoda S."/>
            <person name="Taylor T.D."/>
            <person name="Hayashi T."/>
            <person name="Itoh K."/>
            <person name="Hattori M."/>
        </authorList>
    </citation>
    <scope>NUCLEOTIDE SEQUENCE [LARGE SCALE GENOMIC DNA]</scope>
    <source>
        <strain>SE11</strain>
    </source>
</reference>
<organism>
    <name type="scientific">Escherichia coli (strain SE11)</name>
    <dbReference type="NCBI Taxonomy" id="409438"/>
    <lineage>
        <taxon>Bacteria</taxon>
        <taxon>Pseudomonadati</taxon>
        <taxon>Pseudomonadota</taxon>
        <taxon>Gammaproteobacteria</taxon>
        <taxon>Enterobacterales</taxon>
        <taxon>Enterobacteriaceae</taxon>
        <taxon>Escherichia</taxon>
    </lineage>
</organism>
<accession>B6I275</accession>